<protein>
    <recommendedName>
        <fullName>Active breakpoint cluster region-related protein</fullName>
    </recommendedName>
</protein>
<evidence type="ECO:0000250" key="1">
    <source>
        <dbReference type="UniProtKB" id="A0A0G2JTR4"/>
    </source>
</evidence>
<evidence type="ECO:0000250" key="2">
    <source>
        <dbReference type="UniProtKB" id="Q12979"/>
    </source>
</evidence>
<evidence type="ECO:0000250" key="3">
    <source>
        <dbReference type="UniProtKB" id="Q5SSL4"/>
    </source>
</evidence>
<evidence type="ECO:0000255" key="4">
    <source>
        <dbReference type="PROSITE-ProRule" id="PRU00041"/>
    </source>
</evidence>
<evidence type="ECO:0000255" key="5">
    <source>
        <dbReference type="PROSITE-ProRule" id="PRU00062"/>
    </source>
</evidence>
<evidence type="ECO:0000255" key="6">
    <source>
        <dbReference type="PROSITE-ProRule" id="PRU00145"/>
    </source>
</evidence>
<evidence type="ECO:0000255" key="7">
    <source>
        <dbReference type="PROSITE-ProRule" id="PRU00172"/>
    </source>
</evidence>
<evidence type="ECO:0000256" key="8">
    <source>
        <dbReference type="SAM" id="MobiDB-lite"/>
    </source>
</evidence>
<evidence type="ECO:0000303" key="9">
    <source ref="1"/>
</evidence>
<keyword id="KW-0025">Alternative splicing</keyword>
<keyword id="KW-0966">Cell projection</keyword>
<keyword id="KW-0343">GTPase activation</keyword>
<keyword id="KW-0344">Guanine-nucleotide releasing factor</keyword>
<keyword id="KW-1185">Reference proteome</keyword>
<keyword id="KW-0770">Synapse</keyword>
<comment type="function">
    <text evidence="2">Protein with a unique structure having two opposing regulatory activities toward small GTP-binding proteins. The C-terminus is a GTPase-activating protein domain which stimulates GTP hydrolysis by RAC1, RAC2 and CDC42. Accelerates the intrinsic rate of GTP hydrolysis of RAC1 or CDC42, leading to down-regulation of the active GTP-bound form. The central Dbl homology (DH) domain functions as guanine nucleotide exchange factor (GEF) that modulates the GTPases CDC42, RHOA and RAC1. Promotes the conversion of CDC42, RHOA and RAC1 from the GDP-bound to the GTP-bound form.</text>
</comment>
<comment type="subcellular location">
    <subcellularLocation>
        <location evidence="3">Cell projection</location>
        <location evidence="3">Dendritic spine</location>
    </subcellularLocation>
    <subcellularLocation>
        <location evidence="3">Cell projection</location>
        <location evidence="3">Axon</location>
    </subcellularLocation>
    <subcellularLocation>
        <location evidence="1">Synapse</location>
    </subcellularLocation>
</comment>
<comment type="alternative products">
    <event type="alternative splicing"/>
    <isoform>
        <id>A4II46-1</id>
        <name>1</name>
        <sequence type="displayed"/>
    </isoform>
    <isoform>
        <id>A4II46-2</id>
        <name>2</name>
        <sequence type="described" ref="VSP_035907"/>
    </isoform>
</comment>
<comment type="domain">
    <text evidence="2">The central Dbl homology (DH) domain functions as a guanine nucleotide exchange factor (GEF) that modulates the GTPases CDC42, RHOA and RAC1. Promotes the conversion of CDC42, RHOA and RAC1 from the GDP-bound to the GTP-bound form. The C-terminus is a Rho-GAP domain which stimulates GTP hydrolysis by RAC1, RAC2 and CDC42. The protein has a unique structure having two opposing regulatory activities toward small GTP-binding proteins.</text>
</comment>
<dbReference type="EMBL" id="BC121371">
    <property type="protein sequence ID" value="AAI21372.1"/>
    <property type="molecule type" value="mRNA"/>
</dbReference>
<dbReference type="EMBL" id="BC135846">
    <property type="protein sequence ID" value="AAI35847.1"/>
    <property type="molecule type" value="mRNA"/>
</dbReference>
<dbReference type="RefSeq" id="NP_001072313.1">
    <molecule id="A4II46-2"/>
    <property type="nucleotide sequence ID" value="NM_001078845.1"/>
</dbReference>
<dbReference type="RefSeq" id="XP_012812700.1">
    <molecule id="A4II46-1"/>
    <property type="nucleotide sequence ID" value="XM_012957246.3"/>
</dbReference>
<dbReference type="SMR" id="A4II46"/>
<dbReference type="FunCoup" id="A4II46">
    <property type="interactions" value="1212"/>
</dbReference>
<dbReference type="STRING" id="8364.ENSXETP00000051209"/>
<dbReference type="DNASU" id="779766"/>
<dbReference type="GeneID" id="779766"/>
<dbReference type="KEGG" id="xtr:779766"/>
<dbReference type="AGR" id="Xenbase:XB-GENE-5797083"/>
<dbReference type="CTD" id="29"/>
<dbReference type="Xenbase" id="XB-GENE-5797083">
    <property type="gene designation" value="abr"/>
</dbReference>
<dbReference type="InParanoid" id="A4II46"/>
<dbReference type="OrthoDB" id="2155291at2759"/>
<dbReference type="Proteomes" id="UP000008143">
    <property type="component" value="Chromosome 2"/>
</dbReference>
<dbReference type="GO" id="GO:0030424">
    <property type="term" value="C:axon"/>
    <property type="evidence" value="ECO:0007669"/>
    <property type="project" value="UniProtKB-SubCell"/>
</dbReference>
<dbReference type="GO" id="GO:0043197">
    <property type="term" value="C:dendritic spine"/>
    <property type="evidence" value="ECO:0007669"/>
    <property type="project" value="UniProtKB-SubCell"/>
</dbReference>
<dbReference type="GO" id="GO:0005096">
    <property type="term" value="F:GTPase activator activity"/>
    <property type="evidence" value="ECO:0007669"/>
    <property type="project" value="UniProtKB-KW"/>
</dbReference>
<dbReference type="GO" id="GO:0005085">
    <property type="term" value="F:guanyl-nucleotide exchange factor activity"/>
    <property type="evidence" value="ECO:0007669"/>
    <property type="project" value="UniProtKB-KW"/>
</dbReference>
<dbReference type="GO" id="GO:0035556">
    <property type="term" value="P:intracellular signal transduction"/>
    <property type="evidence" value="ECO:0007669"/>
    <property type="project" value="InterPro"/>
</dbReference>
<dbReference type="CDD" id="cd08686">
    <property type="entry name" value="C2_ABR"/>
    <property type="match status" value="1"/>
</dbReference>
<dbReference type="CDD" id="cd13366">
    <property type="entry name" value="PH_ABR"/>
    <property type="match status" value="1"/>
</dbReference>
<dbReference type="CDD" id="cd04387">
    <property type="entry name" value="RhoGAP_Bcr"/>
    <property type="match status" value="1"/>
</dbReference>
<dbReference type="CDD" id="cd00160">
    <property type="entry name" value="RhoGEF"/>
    <property type="match status" value="1"/>
</dbReference>
<dbReference type="FunFam" id="2.60.40.150:FF:000057">
    <property type="entry name" value="active breakpoint cluster region-related protein isoform X1"/>
    <property type="match status" value="1"/>
</dbReference>
<dbReference type="FunFam" id="1.10.555.10:FF:000004">
    <property type="entry name" value="active breakpoint cluster region-related protein-like"/>
    <property type="match status" value="1"/>
</dbReference>
<dbReference type="Gene3D" id="2.60.40.150">
    <property type="entry name" value="C2 domain"/>
    <property type="match status" value="1"/>
</dbReference>
<dbReference type="Gene3D" id="1.20.900.10">
    <property type="entry name" value="Dbl homology (DH) domain"/>
    <property type="match status" value="1"/>
</dbReference>
<dbReference type="Gene3D" id="2.30.29.30">
    <property type="entry name" value="Pleckstrin-homology domain (PH domain)/Phosphotyrosine-binding domain (PTB)"/>
    <property type="match status" value="1"/>
</dbReference>
<dbReference type="Gene3D" id="1.10.555.10">
    <property type="entry name" value="Rho GTPase activation protein"/>
    <property type="match status" value="1"/>
</dbReference>
<dbReference type="InterPro" id="IPR037769">
    <property type="entry name" value="Abr/Bcr"/>
</dbReference>
<dbReference type="InterPro" id="IPR037865">
    <property type="entry name" value="ABR_PH"/>
</dbReference>
<dbReference type="InterPro" id="IPR000008">
    <property type="entry name" value="C2_dom"/>
</dbReference>
<dbReference type="InterPro" id="IPR035892">
    <property type="entry name" value="C2_domain_sf"/>
</dbReference>
<dbReference type="InterPro" id="IPR035899">
    <property type="entry name" value="DBL_dom_sf"/>
</dbReference>
<dbReference type="InterPro" id="IPR000219">
    <property type="entry name" value="DH_dom"/>
</dbReference>
<dbReference type="InterPro" id="IPR001331">
    <property type="entry name" value="GDS_CDC24_CS"/>
</dbReference>
<dbReference type="InterPro" id="IPR011993">
    <property type="entry name" value="PH-like_dom_sf"/>
</dbReference>
<dbReference type="InterPro" id="IPR001849">
    <property type="entry name" value="PH_domain"/>
</dbReference>
<dbReference type="InterPro" id="IPR008936">
    <property type="entry name" value="Rho_GTPase_activation_prot"/>
</dbReference>
<dbReference type="InterPro" id="IPR000198">
    <property type="entry name" value="RhoGAP_dom"/>
</dbReference>
<dbReference type="PANTHER" id="PTHR23182:SF5">
    <property type="entry name" value="ACTIVE BREAKPOINT CLUSTER REGION-RELATED PROTEIN"/>
    <property type="match status" value="1"/>
</dbReference>
<dbReference type="PANTHER" id="PTHR23182">
    <property type="entry name" value="BREAKPOINT CLUSTER REGION PROTEIN BCR"/>
    <property type="match status" value="1"/>
</dbReference>
<dbReference type="Pfam" id="PF00168">
    <property type="entry name" value="C2"/>
    <property type="match status" value="1"/>
</dbReference>
<dbReference type="Pfam" id="PF19057">
    <property type="entry name" value="PH_19"/>
    <property type="match status" value="1"/>
</dbReference>
<dbReference type="Pfam" id="PF00620">
    <property type="entry name" value="RhoGAP"/>
    <property type="match status" value="1"/>
</dbReference>
<dbReference type="Pfam" id="PF00621">
    <property type="entry name" value="RhoGEF"/>
    <property type="match status" value="1"/>
</dbReference>
<dbReference type="SMART" id="SM00239">
    <property type="entry name" value="C2"/>
    <property type="match status" value="1"/>
</dbReference>
<dbReference type="SMART" id="SM00233">
    <property type="entry name" value="PH"/>
    <property type="match status" value="1"/>
</dbReference>
<dbReference type="SMART" id="SM00324">
    <property type="entry name" value="RhoGAP"/>
    <property type="match status" value="1"/>
</dbReference>
<dbReference type="SMART" id="SM00325">
    <property type="entry name" value="RhoGEF"/>
    <property type="match status" value="1"/>
</dbReference>
<dbReference type="SUPFAM" id="SSF49562">
    <property type="entry name" value="C2 domain (Calcium/lipid-binding domain, CaLB)"/>
    <property type="match status" value="1"/>
</dbReference>
<dbReference type="SUPFAM" id="SSF48065">
    <property type="entry name" value="DBL homology domain (DH-domain)"/>
    <property type="match status" value="1"/>
</dbReference>
<dbReference type="SUPFAM" id="SSF48350">
    <property type="entry name" value="GTPase activation domain, GAP"/>
    <property type="match status" value="1"/>
</dbReference>
<dbReference type="SUPFAM" id="SSF50729">
    <property type="entry name" value="PH domain-like"/>
    <property type="match status" value="1"/>
</dbReference>
<dbReference type="PROSITE" id="PS50004">
    <property type="entry name" value="C2"/>
    <property type="match status" value="1"/>
</dbReference>
<dbReference type="PROSITE" id="PS00741">
    <property type="entry name" value="DH_1"/>
    <property type="match status" value="1"/>
</dbReference>
<dbReference type="PROSITE" id="PS50010">
    <property type="entry name" value="DH_2"/>
    <property type="match status" value="1"/>
</dbReference>
<dbReference type="PROSITE" id="PS50003">
    <property type="entry name" value="PH_DOMAIN"/>
    <property type="match status" value="1"/>
</dbReference>
<dbReference type="PROSITE" id="PS50238">
    <property type="entry name" value="RHOGAP"/>
    <property type="match status" value="1"/>
</dbReference>
<sequence length="862" mass="98563">MEPVSHQGMPRLSWIDTLYSNFNYGTDGYDAEGNEEHKSSREGSETMPYIDESPTMSPQLSARSQDSVDGVSPTPTEVLLPGGESESDKGLLMRKLVLSGVLASEEIYINQLEALLLPMKPLKATASTSQPVLTLQQINDIFYKIEDIYQMHKDFYDKLCPIVLQFDNKTTVGHLFQKLASQLGVYKAFVDNYKFALETAEKCSQCNVQFFKISEDLKVKGPKDSKEQPQSVTMEALLYKPIDRVTRSTLVLHDLLKHTPTDHPDYPLLQDALRISQNFLSSINEDIDPRRTAVTTPKGEPRQLVKDGFLVELSENSRKLRHLFLFTDLLLCAKLKKTTVGKHQQYDCKWYIPLADLVFPSPEESEPIPQLHATPDHEIEEMKAKISVLKSEIQKERKSNKGSSRTIERLKKKMFEYESWLLLYSPTIPFRIHNKNGKSYFFLLSSDYERSEWREAIQKLQKKDLQALALSPFELQVLTASCFKLRTVHNVPIISHKDDDESPGLYGFLHVIVKSAKGFSHSSNLYCTLEVDSFGYFVSKAKTRVFRDTTEPEWNEEFEIELEGSQCLRILCYEKCYDKSKLNKDNNEIVDKIMGKGQIQLDPQVVQSKNWHDDVIEMNGIKVEFSMKFSSRDMSLKRTPSKKQTGVFGVKISVVTKRERSKVPYIVRQCIEEVEKRGIEEVGIYRISGVATDIQALKASFDANSKDILMMLSDMDINAIAGTLKLYFRELPEPLLTDRLYLAFMEGIALSDPAAKENCMMHLLRSLPDPNLMTFLFLLQHLKRVAEKEPINKMSLHNLATVFGPTLLRPSEVESKGHMNLASDIWSHDVMAQVQVLLYYLQHPPISFSELKRSTLYYSTDV</sequence>
<accession>A4II46</accession>
<accession>Q0V9W3</accession>
<reference key="1">
    <citation type="submission" date="2007-03" db="EMBL/GenBank/DDBJ databases">
        <authorList>
            <consortium name="NIH - Xenopus Gene Collection (XGC) project"/>
        </authorList>
    </citation>
    <scope>NUCLEOTIDE SEQUENCE [LARGE SCALE MRNA] (ISOFORMS 1 AND 2)</scope>
    <source>
        <tissue>Brain</tissue>
        <tissue>Embryo</tissue>
    </source>
</reference>
<gene>
    <name type="primary">abr</name>
</gene>
<proteinExistence type="evidence at transcript level"/>
<name>ABR_XENTR</name>
<organism>
    <name type="scientific">Xenopus tropicalis</name>
    <name type="common">Western clawed frog</name>
    <name type="synonym">Silurana tropicalis</name>
    <dbReference type="NCBI Taxonomy" id="8364"/>
    <lineage>
        <taxon>Eukaryota</taxon>
        <taxon>Metazoa</taxon>
        <taxon>Chordata</taxon>
        <taxon>Craniata</taxon>
        <taxon>Vertebrata</taxon>
        <taxon>Euteleostomi</taxon>
        <taxon>Amphibia</taxon>
        <taxon>Batrachia</taxon>
        <taxon>Anura</taxon>
        <taxon>Pipoidea</taxon>
        <taxon>Pipidae</taxon>
        <taxon>Xenopodinae</taxon>
        <taxon>Xenopus</taxon>
        <taxon>Silurana</taxon>
    </lineage>
</organism>
<feature type="chain" id="PRO_0000355541" description="Active breakpoint cluster region-related protein">
    <location>
        <begin position="1"/>
        <end position="862"/>
    </location>
</feature>
<feature type="domain" description="DH" evidence="5">
    <location>
        <begin position="93"/>
        <end position="286"/>
    </location>
</feature>
<feature type="domain" description="PH" evidence="6">
    <location>
        <begin position="303"/>
        <end position="462"/>
    </location>
</feature>
<feature type="domain" description="C2" evidence="4">
    <location>
        <begin position="488"/>
        <end position="616"/>
    </location>
</feature>
<feature type="domain" description="Rho-GAP" evidence="7">
    <location>
        <begin position="650"/>
        <end position="848"/>
    </location>
</feature>
<feature type="region of interest" description="Disordered" evidence="8">
    <location>
        <begin position="30"/>
        <end position="84"/>
    </location>
</feature>
<feature type="compositionally biased region" description="Basic and acidic residues" evidence="8">
    <location>
        <begin position="34"/>
        <end position="44"/>
    </location>
</feature>
<feature type="compositionally biased region" description="Polar residues" evidence="8">
    <location>
        <begin position="54"/>
        <end position="67"/>
    </location>
</feature>
<feature type="site" description="Arginine finger; crucial for GTP hydrolysis by stabilizing the transition state" evidence="7">
    <location>
        <position position="686"/>
    </location>
</feature>
<feature type="splice variant" id="VSP_035907" description="In isoform 2." evidence="9">
    <original>MEPVSHQGMPRLSWIDTLYSN</original>
    <variation>MTPRHKPYASSLAALIEGTQRPFLFLVTD</variation>
    <location>
        <begin position="1"/>
        <end position="21"/>
    </location>
</feature>